<protein>
    <recommendedName>
        <fullName evidence="1">Serine hydroxymethyltransferase</fullName>
        <shortName evidence="1">SHMT</shortName>
        <shortName evidence="1">Serine methylase</shortName>
        <ecNumber evidence="1">2.1.2.1</ecNumber>
    </recommendedName>
</protein>
<reference key="1">
    <citation type="journal article" date="2008" name="PLoS ONE">
        <title>Survival in nuclear waste, extreme resistance, and potential applications gleaned from the genome sequence of Kineococcus radiotolerans SRS30216.</title>
        <authorList>
            <person name="Bagwell C.E."/>
            <person name="Bhat S."/>
            <person name="Hawkins G.M."/>
            <person name="Smith B.W."/>
            <person name="Biswas T."/>
            <person name="Hoover T.R."/>
            <person name="Saunders E."/>
            <person name="Han C.S."/>
            <person name="Tsodikov O.V."/>
            <person name="Shimkets L.J."/>
        </authorList>
    </citation>
    <scope>NUCLEOTIDE SEQUENCE [LARGE SCALE GENOMIC DNA]</scope>
    <source>
        <strain>ATCC BAA-149 / DSM 14245 / SRS30216</strain>
    </source>
</reference>
<proteinExistence type="inferred from homology"/>
<accession>A6WF55</accession>
<organism>
    <name type="scientific">Kineococcus radiotolerans (strain ATCC BAA-149 / DSM 14245 / SRS30216)</name>
    <dbReference type="NCBI Taxonomy" id="266940"/>
    <lineage>
        <taxon>Bacteria</taxon>
        <taxon>Bacillati</taxon>
        <taxon>Actinomycetota</taxon>
        <taxon>Actinomycetes</taxon>
        <taxon>Kineosporiales</taxon>
        <taxon>Kineosporiaceae</taxon>
        <taxon>Kineococcus</taxon>
    </lineage>
</organism>
<dbReference type="EC" id="2.1.2.1" evidence="1"/>
<dbReference type="EMBL" id="CP000750">
    <property type="protein sequence ID" value="ABS05444.1"/>
    <property type="molecule type" value="Genomic_DNA"/>
</dbReference>
<dbReference type="RefSeq" id="WP_012086270.1">
    <property type="nucleotide sequence ID" value="NC_009664.2"/>
</dbReference>
<dbReference type="SMR" id="A6WF55"/>
<dbReference type="STRING" id="266940.Krad_3981"/>
<dbReference type="KEGG" id="kra:Krad_3981"/>
<dbReference type="eggNOG" id="COG0112">
    <property type="taxonomic scope" value="Bacteria"/>
</dbReference>
<dbReference type="HOGENOM" id="CLU_022477_2_1_11"/>
<dbReference type="UniPathway" id="UPA00193"/>
<dbReference type="UniPathway" id="UPA00288">
    <property type="reaction ID" value="UER01023"/>
</dbReference>
<dbReference type="Proteomes" id="UP000001116">
    <property type="component" value="Chromosome"/>
</dbReference>
<dbReference type="GO" id="GO:0005829">
    <property type="term" value="C:cytosol"/>
    <property type="evidence" value="ECO:0007669"/>
    <property type="project" value="TreeGrafter"/>
</dbReference>
<dbReference type="GO" id="GO:0004372">
    <property type="term" value="F:glycine hydroxymethyltransferase activity"/>
    <property type="evidence" value="ECO:0007669"/>
    <property type="project" value="UniProtKB-UniRule"/>
</dbReference>
<dbReference type="GO" id="GO:0030170">
    <property type="term" value="F:pyridoxal phosphate binding"/>
    <property type="evidence" value="ECO:0007669"/>
    <property type="project" value="UniProtKB-UniRule"/>
</dbReference>
<dbReference type="GO" id="GO:0019264">
    <property type="term" value="P:glycine biosynthetic process from serine"/>
    <property type="evidence" value="ECO:0007669"/>
    <property type="project" value="UniProtKB-UniRule"/>
</dbReference>
<dbReference type="GO" id="GO:0035999">
    <property type="term" value="P:tetrahydrofolate interconversion"/>
    <property type="evidence" value="ECO:0007669"/>
    <property type="project" value="UniProtKB-UniRule"/>
</dbReference>
<dbReference type="CDD" id="cd00378">
    <property type="entry name" value="SHMT"/>
    <property type="match status" value="1"/>
</dbReference>
<dbReference type="FunFam" id="3.40.640.10:FF:000001">
    <property type="entry name" value="Serine hydroxymethyltransferase"/>
    <property type="match status" value="1"/>
</dbReference>
<dbReference type="Gene3D" id="3.90.1150.10">
    <property type="entry name" value="Aspartate Aminotransferase, domain 1"/>
    <property type="match status" value="1"/>
</dbReference>
<dbReference type="Gene3D" id="3.40.640.10">
    <property type="entry name" value="Type I PLP-dependent aspartate aminotransferase-like (Major domain)"/>
    <property type="match status" value="1"/>
</dbReference>
<dbReference type="HAMAP" id="MF_00051">
    <property type="entry name" value="SHMT"/>
    <property type="match status" value="1"/>
</dbReference>
<dbReference type="InterPro" id="IPR015424">
    <property type="entry name" value="PyrdxlP-dep_Trfase"/>
</dbReference>
<dbReference type="InterPro" id="IPR015421">
    <property type="entry name" value="PyrdxlP-dep_Trfase_major"/>
</dbReference>
<dbReference type="InterPro" id="IPR015422">
    <property type="entry name" value="PyrdxlP-dep_Trfase_small"/>
</dbReference>
<dbReference type="InterPro" id="IPR001085">
    <property type="entry name" value="Ser_HO-MeTrfase"/>
</dbReference>
<dbReference type="InterPro" id="IPR049943">
    <property type="entry name" value="Ser_HO-MeTrfase-like"/>
</dbReference>
<dbReference type="InterPro" id="IPR019798">
    <property type="entry name" value="Ser_HO-MeTrfase_PLP_BS"/>
</dbReference>
<dbReference type="InterPro" id="IPR039429">
    <property type="entry name" value="SHMT-like_dom"/>
</dbReference>
<dbReference type="NCBIfam" id="NF000586">
    <property type="entry name" value="PRK00011.1"/>
    <property type="match status" value="1"/>
</dbReference>
<dbReference type="PANTHER" id="PTHR11680">
    <property type="entry name" value="SERINE HYDROXYMETHYLTRANSFERASE"/>
    <property type="match status" value="1"/>
</dbReference>
<dbReference type="PANTHER" id="PTHR11680:SF35">
    <property type="entry name" value="SERINE HYDROXYMETHYLTRANSFERASE 1"/>
    <property type="match status" value="1"/>
</dbReference>
<dbReference type="Pfam" id="PF00464">
    <property type="entry name" value="SHMT"/>
    <property type="match status" value="1"/>
</dbReference>
<dbReference type="PIRSF" id="PIRSF000412">
    <property type="entry name" value="SHMT"/>
    <property type="match status" value="1"/>
</dbReference>
<dbReference type="SUPFAM" id="SSF53383">
    <property type="entry name" value="PLP-dependent transferases"/>
    <property type="match status" value="1"/>
</dbReference>
<dbReference type="PROSITE" id="PS00096">
    <property type="entry name" value="SHMT"/>
    <property type="match status" value="1"/>
</dbReference>
<sequence>MTDVLPTTPTASGVTDRPLSEVDPEIAAVLDAELGRQRDTLEMIASENFAPRSVLEAQGSVLTNKYAEGYPGKRYYGGCEHVDVAEELARTRAKELFGAEHANVQPHSGASANAAAMHAFIRGGDGILGLELAHGGHLTHGMKINFSGRMYDVSSYGVDPQTFRVDMDVVRAVALESRPKLIIAGWSAYPRQLDFAAFRSIADEVGAHLMVDMAHFAGLVAAGLHPSPVPHAHVVTSTVHKTLAGPRSGLILTRQEFAKKIDSAVFPGQQGGPLMHVVAAKAVAFKVAGSEEFAERQRRTLEGAKIVAERLTAPDVAEAGVSVLTGGTDVHLVLVDLRDSKLDGQQAEDRLHEVGITVNRNAVPFDPRPPMVTSGLRIGTPALATRGFGAAEFTEVADVIALALKPEFDADALRARVAKLTAEFPLYPSAGSFA</sequence>
<comment type="function">
    <text evidence="1">Catalyzes the reversible interconversion of serine and glycine with tetrahydrofolate (THF) serving as the one-carbon carrier. This reaction serves as the major source of one-carbon groups required for the biosynthesis of purines, thymidylate, methionine, and other important biomolecules. Also exhibits THF-independent aldolase activity toward beta-hydroxyamino acids, producing glycine and aldehydes, via a retro-aldol mechanism.</text>
</comment>
<comment type="catalytic activity">
    <reaction evidence="1">
        <text>(6R)-5,10-methylene-5,6,7,8-tetrahydrofolate + glycine + H2O = (6S)-5,6,7,8-tetrahydrofolate + L-serine</text>
        <dbReference type="Rhea" id="RHEA:15481"/>
        <dbReference type="ChEBI" id="CHEBI:15377"/>
        <dbReference type="ChEBI" id="CHEBI:15636"/>
        <dbReference type="ChEBI" id="CHEBI:33384"/>
        <dbReference type="ChEBI" id="CHEBI:57305"/>
        <dbReference type="ChEBI" id="CHEBI:57453"/>
        <dbReference type="EC" id="2.1.2.1"/>
    </reaction>
</comment>
<comment type="cofactor">
    <cofactor evidence="1">
        <name>pyridoxal 5'-phosphate</name>
        <dbReference type="ChEBI" id="CHEBI:597326"/>
    </cofactor>
</comment>
<comment type="pathway">
    <text evidence="1">One-carbon metabolism; tetrahydrofolate interconversion.</text>
</comment>
<comment type="pathway">
    <text evidence="1">Amino-acid biosynthesis; glycine biosynthesis; glycine from L-serine: step 1/1.</text>
</comment>
<comment type="subunit">
    <text evidence="1">Homodimer.</text>
</comment>
<comment type="subcellular location">
    <subcellularLocation>
        <location evidence="1">Cytoplasm</location>
    </subcellularLocation>
</comment>
<comment type="similarity">
    <text evidence="1">Belongs to the SHMT family.</text>
</comment>
<evidence type="ECO:0000255" key="1">
    <source>
        <dbReference type="HAMAP-Rule" id="MF_00051"/>
    </source>
</evidence>
<gene>
    <name evidence="1" type="primary">glyA</name>
    <name type="ordered locus">Krad_3981</name>
</gene>
<keyword id="KW-0028">Amino-acid biosynthesis</keyword>
<keyword id="KW-0963">Cytoplasm</keyword>
<keyword id="KW-0554">One-carbon metabolism</keyword>
<keyword id="KW-0663">Pyridoxal phosphate</keyword>
<keyword id="KW-1185">Reference proteome</keyword>
<keyword id="KW-0808">Transferase</keyword>
<feature type="chain" id="PRO_0000369931" description="Serine hydroxymethyltransferase">
    <location>
        <begin position="1"/>
        <end position="434"/>
    </location>
</feature>
<feature type="binding site" evidence="1">
    <location>
        <position position="132"/>
    </location>
    <ligand>
        <name>(6S)-5,6,7,8-tetrahydrofolate</name>
        <dbReference type="ChEBI" id="CHEBI:57453"/>
    </ligand>
</feature>
<feature type="binding site" evidence="1">
    <location>
        <begin position="136"/>
        <end position="138"/>
    </location>
    <ligand>
        <name>(6S)-5,6,7,8-tetrahydrofolate</name>
        <dbReference type="ChEBI" id="CHEBI:57453"/>
    </ligand>
</feature>
<feature type="site" description="Plays an important role in substrate specificity" evidence="1">
    <location>
        <position position="240"/>
    </location>
</feature>
<feature type="modified residue" description="N6-(pyridoxal phosphate)lysine" evidence="1">
    <location>
        <position position="241"/>
    </location>
</feature>
<name>GLYA_KINRD</name>